<protein>
    <recommendedName>
        <fullName evidence="1">Endonuclease MutS2</fullName>
        <ecNumber evidence="1">3.1.-.-</ecNumber>
    </recommendedName>
    <alternativeName>
        <fullName evidence="1">Ribosome-associated protein quality control-upstream factor</fullName>
        <shortName evidence="1">RQC-upstream factor</shortName>
        <shortName evidence="1">RqcU</shortName>
        <ecNumber evidence="1">3.6.4.-</ecNumber>
    </alternativeName>
</protein>
<proteinExistence type="inferred from homology"/>
<evidence type="ECO:0000255" key="1">
    <source>
        <dbReference type="HAMAP-Rule" id="MF_00092"/>
    </source>
</evidence>
<organism>
    <name type="scientific">Clostridium perfringens (strain SM101 / Type A)</name>
    <dbReference type="NCBI Taxonomy" id="289380"/>
    <lineage>
        <taxon>Bacteria</taxon>
        <taxon>Bacillati</taxon>
        <taxon>Bacillota</taxon>
        <taxon>Clostridia</taxon>
        <taxon>Eubacteriales</taxon>
        <taxon>Clostridiaceae</taxon>
        <taxon>Clostridium</taxon>
    </lineage>
</organism>
<sequence length="786" mass="88103">MNDRVLRVLEFNKIKELVKGYAITKSAKEMVLDLKPYDSVYDVKEHLEETKEALDILMRKGNPPFEGLYDVKEAITRAEKGGVLSIEGLLRIGNMLSVTRKLSDFLARKEEEEEHRILEGMREGLIVLRGVESAISKAIVSEDEIADSASDKLYSIRRSLKEKNSSIRDKVNSIVRSNAQYLQDSLYTVRGDRYVIPVKAEYKSQVPGLVHDQSSTGATLFIEPTALVNLNNEIKELMLKERAEIERILAELSALVYKNIDVIKVNFNIIVELDFIFAKAKYGSDLGGTMPIVNEEGVIDLMDARHPLIPKDKVVSSDIYLGREFSTLLITGPNTGGKTVTLKTTGLIELMGLSGLLIPASENSSISFFEEIFADIGDEQSIEQSLSTFSSHMTNIVKIMEKANNKSFVLFDELGAGTDPTEGAALAISILENLRARGCRIMSTTHYSELKGYALKTENVENASVEFNVETLRPTYRLLIGVPGKSNAFEISRRLGLKDNIIEEAKKVISTESLQFEDLIQSLQEKSIKAENDAREAAILRNDAEKYKNRYKEKFERIESVRDNVYADARREAKQILDSAKEEADTILKNMRDLERMGISSDARRKLEAERGKLRDKISDAEARLQKKKEEQKGEELKKIEVGMEALLPSINQKVIVLSKPDNKGEVQVQAGIMKINVKAKDLRVAKETKEEKKIKKREARLNLRQVDPSIDLRGMDSEEACYTADKYLDDAYVAGRGEVTLVHGKGTGVLRKAINDMLKKHPHVKSHRLGEYGEGGTGVTVVILK</sequence>
<comment type="function">
    <text evidence="1">Endonuclease that is involved in the suppression of homologous recombination and thus may have a key role in the control of bacterial genetic diversity.</text>
</comment>
<comment type="function">
    <text evidence="1">Acts as a ribosome collision sensor, splitting the ribosome into its 2 subunits. Detects stalled/collided 70S ribosomes which it binds and splits by an ATP-hydrolysis driven conformational change. Acts upstream of the ribosome quality control system (RQC), a ribosome-associated complex that mediates the extraction of incompletely synthesized nascent chains from stalled ribosomes and their subsequent degradation. Probably generates substrates for RQC.</text>
</comment>
<comment type="subunit">
    <text evidence="1">Homodimer. Binds to stalled ribosomes, contacting rRNA.</text>
</comment>
<comment type="similarity">
    <text evidence="1">Belongs to the DNA mismatch repair MutS family. MutS2 subfamily.</text>
</comment>
<keyword id="KW-0067">ATP-binding</keyword>
<keyword id="KW-0238">DNA-binding</keyword>
<keyword id="KW-0255">Endonuclease</keyword>
<keyword id="KW-0378">Hydrolase</keyword>
<keyword id="KW-0540">Nuclease</keyword>
<keyword id="KW-0547">Nucleotide-binding</keyword>
<keyword id="KW-0694">RNA-binding</keyword>
<keyword id="KW-0699">rRNA-binding</keyword>
<accession>Q0SRU6</accession>
<name>MUTS2_CLOPS</name>
<feature type="chain" id="PRO_1000093355" description="Endonuclease MutS2">
    <location>
        <begin position="1"/>
        <end position="786"/>
    </location>
</feature>
<feature type="domain" description="Smr" evidence="1">
    <location>
        <begin position="711"/>
        <end position="786"/>
    </location>
</feature>
<feature type="binding site" evidence="1">
    <location>
        <begin position="332"/>
        <end position="339"/>
    </location>
    <ligand>
        <name>ATP</name>
        <dbReference type="ChEBI" id="CHEBI:30616"/>
    </ligand>
</feature>
<reference key="1">
    <citation type="journal article" date="2006" name="Genome Res.">
        <title>Skewed genomic variability in strains of the toxigenic bacterial pathogen, Clostridium perfringens.</title>
        <authorList>
            <person name="Myers G.S.A."/>
            <person name="Rasko D.A."/>
            <person name="Cheung J.K."/>
            <person name="Ravel J."/>
            <person name="Seshadri R."/>
            <person name="DeBoy R.T."/>
            <person name="Ren Q."/>
            <person name="Varga J."/>
            <person name="Awad M.M."/>
            <person name="Brinkac L.M."/>
            <person name="Daugherty S.C."/>
            <person name="Haft D.H."/>
            <person name="Dodson R.J."/>
            <person name="Madupu R."/>
            <person name="Nelson W.C."/>
            <person name="Rosovitz M.J."/>
            <person name="Sullivan S.A."/>
            <person name="Khouri H."/>
            <person name="Dimitrov G.I."/>
            <person name="Watkins K.L."/>
            <person name="Mulligan S."/>
            <person name="Benton J."/>
            <person name="Radune D."/>
            <person name="Fisher D.J."/>
            <person name="Atkins H.S."/>
            <person name="Hiscox T."/>
            <person name="Jost B.H."/>
            <person name="Billington S.J."/>
            <person name="Songer J.G."/>
            <person name="McClane B.A."/>
            <person name="Titball R.W."/>
            <person name="Rood J.I."/>
            <person name="Melville S.B."/>
            <person name="Paulsen I.T."/>
        </authorList>
    </citation>
    <scope>NUCLEOTIDE SEQUENCE [LARGE SCALE GENOMIC DNA]</scope>
    <source>
        <strain>SM101 / Type A</strain>
    </source>
</reference>
<dbReference type="EC" id="3.1.-.-" evidence="1"/>
<dbReference type="EC" id="3.6.4.-" evidence="1"/>
<dbReference type="EMBL" id="CP000312">
    <property type="protein sequence ID" value="ABG87167.1"/>
    <property type="molecule type" value="Genomic_DNA"/>
</dbReference>
<dbReference type="RefSeq" id="WP_011592735.1">
    <property type="nucleotide sequence ID" value="NC_008262.1"/>
</dbReference>
<dbReference type="SMR" id="Q0SRU6"/>
<dbReference type="KEGG" id="cpr:CPR_1847"/>
<dbReference type="Proteomes" id="UP000001824">
    <property type="component" value="Chromosome"/>
</dbReference>
<dbReference type="GO" id="GO:0005524">
    <property type="term" value="F:ATP binding"/>
    <property type="evidence" value="ECO:0007669"/>
    <property type="project" value="UniProtKB-UniRule"/>
</dbReference>
<dbReference type="GO" id="GO:0016887">
    <property type="term" value="F:ATP hydrolysis activity"/>
    <property type="evidence" value="ECO:0007669"/>
    <property type="project" value="InterPro"/>
</dbReference>
<dbReference type="GO" id="GO:0140664">
    <property type="term" value="F:ATP-dependent DNA damage sensor activity"/>
    <property type="evidence" value="ECO:0007669"/>
    <property type="project" value="InterPro"/>
</dbReference>
<dbReference type="GO" id="GO:0004519">
    <property type="term" value="F:endonuclease activity"/>
    <property type="evidence" value="ECO:0007669"/>
    <property type="project" value="UniProtKB-UniRule"/>
</dbReference>
<dbReference type="GO" id="GO:0030983">
    <property type="term" value="F:mismatched DNA binding"/>
    <property type="evidence" value="ECO:0007669"/>
    <property type="project" value="InterPro"/>
</dbReference>
<dbReference type="GO" id="GO:0043023">
    <property type="term" value="F:ribosomal large subunit binding"/>
    <property type="evidence" value="ECO:0007669"/>
    <property type="project" value="UniProtKB-UniRule"/>
</dbReference>
<dbReference type="GO" id="GO:0019843">
    <property type="term" value="F:rRNA binding"/>
    <property type="evidence" value="ECO:0007669"/>
    <property type="project" value="UniProtKB-UniRule"/>
</dbReference>
<dbReference type="GO" id="GO:0006298">
    <property type="term" value="P:mismatch repair"/>
    <property type="evidence" value="ECO:0007669"/>
    <property type="project" value="InterPro"/>
</dbReference>
<dbReference type="GO" id="GO:0045910">
    <property type="term" value="P:negative regulation of DNA recombination"/>
    <property type="evidence" value="ECO:0007669"/>
    <property type="project" value="InterPro"/>
</dbReference>
<dbReference type="GO" id="GO:0072344">
    <property type="term" value="P:rescue of stalled ribosome"/>
    <property type="evidence" value="ECO:0007669"/>
    <property type="project" value="UniProtKB-UniRule"/>
</dbReference>
<dbReference type="CDD" id="cd03280">
    <property type="entry name" value="ABC_MutS2"/>
    <property type="match status" value="1"/>
</dbReference>
<dbReference type="FunFam" id="3.30.1370.110:FF:000007">
    <property type="entry name" value="Endonuclease MutS2"/>
    <property type="match status" value="1"/>
</dbReference>
<dbReference type="FunFam" id="3.40.50.300:FF:000830">
    <property type="entry name" value="Endonuclease MutS2"/>
    <property type="match status" value="1"/>
</dbReference>
<dbReference type="Gene3D" id="3.30.1370.110">
    <property type="match status" value="1"/>
</dbReference>
<dbReference type="Gene3D" id="3.40.50.300">
    <property type="entry name" value="P-loop containing nucleotide triphosphate hydrolases"/>
    <property type="match status" value="1"/>
</dbReference>
<dbReference type="HAMAP" id="MF_00092">
    <property type="entry name" value="MutS2"/>
    <property type="match status" value="1"/>
</dbReference>
<dbReference type="InterPro" id="IPR000432">
    <property type="entry name" value="DNA_mismatch_repair_MutS_C"/>
</dbReference>
<dbReference type="InterPro" id="IPR007696">
    <property type="entry name" value="DNA_mismatch_repair_MutS_core"/>
</dbReference>
<dbReference type="InterPro" id="IPR036187">
    <property type="entry name" value="DNA_mismatch_repair_MutS_sf"/>
</dbReference>
<dbReference type="InterPro" id="IPR046893">
    <property type="entry name" value="MSSS"/>
</dbReference>
<dbReference type="InterPro" id="IPR045076">
    <property type="entry name" value="MutS"/>
</dbReference>
<dbReference type="InterPro" id="IPR005747">
    <property type="entry name" value="MutS2"/>
</dbReference>
<dbReference type="InterPro" id="IPR027417">
    <property type="entry name" value="P-loop_NTPase"/>
</dbReference>
<dbReference type="InterPro" id="IPR002625">
    <property type="entry name" value="Smr_dom"/>
</dbReference>
<dbReference type="InterPro" id="IPR036063">
    <property type="entry name" value="Smr_dom_sf"/>
</dbReference>
<dbReference type="NCBIfam" id="TIGR01069">
    <property type="entry name" value="mutS2"/>
    <property type="match status" value="1"/>
</dbReference>
<dbReference type="PANTHER" id="PTHR48466:SF2">
    <property type="entry name" value="OS10G0509000 PROTEIN"/>
    <property type="match status" value="1"/>
</dbReference>
<dbReference type="PANTHER" id="PTHR48466">
    <property type="entry name" value="OS10G0509000 PROTEIN-RELATED"/>
    <property type="match status" value="1"/>
</dbReference>
<dbReference type="Pfam" id="PF20297">
    <property type="entry name" value="MSSS"/>
    <property type="match status" value="1"/>
</dbReference>
<dbReference type="Pfam" id="PF00488">
    <property type="entry name" value="MutS_V"/>
    <property type="match status" value="1"/>
</dbReference>
<dbReference type="Pfam" id="PF01713">
    <property type="entry name" value="Smr"/>
    <property type="match status" value="1"/>
</dbReference>
<dbReference type="PIRSF" id="PIRSF005814">
    <property type="entry name" value="MutS_YshD"/>
    <property type="match status" value="1"/>
</dbReference>
<dbReference type="SMART" id="SM00534">
    <property type="entry name" value="MUTSac"/>
    <property type="match status" value="1"/>
</dbReference>
<dbReference type="SMART" id="SM00533">
    <property type="entry name" value="MUTSd"/>
    <property type="match status" value="1"/>
</dbReference>
<dbReference type="SMART" id="SM00463">
    <property type="entry name" value="SMR"/>
    <property type="match status" value="1"/>
</dbReference>
<dbReference type="SUPFAM" id="SSF48334">
    <property type="entry name" value="DNA repair protein MutS, domain III"/>
    <property type="match status" value="1"/>
</dbReference>
<dbReference type="SUPFAM" id="SSF52540">
    <property type="entry name" value="P-loop containing nucleoside triphosphate hydrolases"/>
    <property type="match status" value="1"/>
</dbReference>
<dbReference type="SUPFAM" id="SSF160443">
    <property type="entry name" value="SMR domain-like"/>
    <property type="match status" value="1"/>
</dbReference>
<dbReference type="PROSITE" id="PS00486">
    <property type="entry name" value="DNA_MISMATCH_REPAIR_2"/>
    <property type="match status" value="1"/>
</dbReference>
<dbReference type="PROSITE" id="PS50828">
    <property type="entry name" value="SMR"/>
    <property type="match status" value="1"/>
</dbReference>
<gene>
    <name evidence="1" type="primary">mutS2</name>
    <name evidence="1" type="synonym">rqcU</name>
    <name type="ordered locus">CPR_1847</name>
</gene>